<feature type="chain" id="PRO_0000260490" description="Protein Tax-3">
    <location>
        <begin position="1"/>
        <end position="350"/>
    </location>
</feature>
<feature type="zinc finger region" evidence="2">
    <location>
        <begin position="23"/>
        <end position="49"/>
    </location>
</feature>
<feature type="region of interest" description="Interaction with CREB1" evidence="1">
    <location>
        <begin position="1"/>
        <end position="58"/>
    </location>
</feature>
<feature type="region of interest" description="Interaction with CREBBP/P300" evidence="1">
    <location>
        <begin position="81"/>
        <end position="95"/>
    </location>
</feature>
<feature type="region of interest" description="Interaction with IKBKG" evidence="1">
    <location>
        <begin position="106"/>
        <end position="111"/>
    </location>
</feature>
<feature type="region of interest" description="Homodimerization" evidence="1">
    <location>
        <begin position="116"/>
        <end position="145"/>
    </location>
</feature>
<feature type="region of interest" description="Homodimerization" evidence="1">
    <location>
        <begin position="213"/>
        <end position="248"/>
    </location>
</feature>
<feature type="region of interest" description="Transactivation" evidence="1">
    <location>
        <begin position="289"/>
        <end position="322"/>
    </location>
</feature>
<feature type="region of interest" description="Interaction with CREBBP C-terminus" evidence="1">
    <location>
        <begin position="312"/>
        <end position="319"/>
    </location>
</feature>
<feature type="region of interest" description="Disordered" evidence="3">
    <location>
        <begin position="327"/>
        <end position="350"/>
    </location>
</feature>
<feature type="short sequence motif" description="SH3-binding" evidence="2">
    <location>
        <begin position="73"/>
        <end position="80"/>
    </location>
</feature>
<feature type="short sequence motif" description="Nuclear export signal" evidence="1">
    <location>
        <begin position="188"/>
        <end position="202"/>
    </location>
</feature>
<feature type="short sequence motif" description="PDZ-binding">
    <location>
        <begin position="347"/>
        <end position="350"/>
    </location>
</feature>
<feature type="modified residue" description="Phosphothreonine; by host" evidence="1">
    <location>
        <position position="48"/>
    </location>
</feature>
<feature type="modified residue" description="Phosphothreonine; by host" evidence="1">
    <location>
        <position position="184"/>
    </location>
</feature>
<feature type="modified residue" description="Phosphothreonine; by host" evidence="1">
    <location>
        <position position="215"/>
    </location>
</feature>
<feature type="modified residue" description="Phosphoserine; by host" evidence="1">
    <location>
        <position position="300"/>
    </location>
</feature>
<feature type="modified residue" description="Phosphoserine; by host" evidence="1">
    <location>
        <position position="301"/>
    </location>
</feature>
<feature type="mutagenesis site" description="Nuclear localization, with fewer cytoplasmic speckles than wild-type." evidence="4">
    <original>M</original>
    <variation>S</variation>
    <location>
        <position position="131"/>
    </location>
</feature>
<feature type="mutagenesis site" description="Nuclear localization, with fewer cytoplasmic speckles than wild-type." evidence="4">
    <original>LL</original>
    <variation>RS</variation>
    <location>
        <begin position="319"/>
        <end position="320"/>
    </location>
</feature>
<comment type="function">
    <text>Transcriptional activator that activates both the viral long terminal repeat (LTR) and cellular promoters via activation of CREB, NF-kappa-B, SRF and AP-1 pathways. Binds to two 21 bp repeat elements located within the LTRs, referred to as Tax-responsive element (TRE). Binding to TRE requires the interaction with CREB1 and CREBBP. Activation of NF-kappa-B leads to up-regulation of the expression of gene promoters containing NFkB motifs like IL8 or BCL2L1. Inhibits the action of p53/TP53 and MYCB. All these functions could lead to the possible occurrence of lymphoproliferative disorders. Required for viral replication.</text>
</comment>
<comment type="subunit">
    <text evidence="1">Homodimer. Interacts with host CREB1, CREBBP and EP300 (By similarity).</text>
</comment>
<comment type="subcellular location">
    <subcellularLocation>
        <location evidence="4">Host nucleus</location>
    </subcellularLocation>
    <subcellularLocation>
        <location evidence="4">Host cytoplasm</location>
    </subcellularLocation>
    <text>Shuttles from the nucleus to the cytoplasm. Found predominantly in the nucleus, with some cytoplasmic speckles.</text>
</comment>
<comment type="domain">
    <text evidence="1">The 48 N-terminal residues contain a non-canonical functional nuclear localization signal (NLS).</text>
</comment>
<comment type="domain">
    <text>The PDZ-binding domain may mediate binding to PDZ-containing proteins and could be a factor of pathogenicity.</text>
</comment>
<comment type="PTM">
    <text evidence="1">Phosphorylation at Thr-48 results in the loss of NF-kappa-B activation function. Phosphorylation at Thr-215 results in loss of CREB and NF-B responsive promoters activation. Phosphorylation at Thr-184 has no effect on these functions. Phosphorylation of either Ser-300 or Ser-301 is necessary for localization to nuclear bodies. Thr-48, Thr-184 and Thr-215 are highly phosphorylated, whereas Ser-300 or Ser-301 are only rarely phosphorylated (By similarity).</text>
</comment>
<comment type="similarity">
    <text evidence="5">Belongs to the deltaretrovirus Tax protein family.</text>
</comment>
<keyword id="KW-0010">Activator</keyword>
<keyword id="KW-0238">DNA-binding</keyword>
<keyword id="KW-1077">G0/G1 host cell cycle checkpoint dysregulation by virus</keyword>
<keyword id="KW-1035">Host cytoplasm</keyword>
<keyword id="KW-1048">Host nucleus</keyword>
<keyword id="KW-0945">Host-virus interaction</keyword>
<keyword id="KW-0479">Metal-binding</keyword>
<keyword id="KW-1121">Modulation of host cell cycle by virus</keyword>
<keyword id="KW-0553">Oncogene</keyword>
<keyword id="KW-0597">Phosphoprotein</keyword>
<keyword id="KW-0729">SH3-binding</keyword>
<keyword id="KW-0804">Transcription</keyword>
<keyword id="KW-0805">Transcription regulation</keyword>
<keyword id="KW-0862">Zinc</keyword>
<keyword id="KW-0863">Zinc-finger</keyword>
<proteinExistence type="evidence at protein level"/>
<gene>
    <name type="primary">tax</name>
</gene>
<name>TAX_HTL3P</name>
<accession>Q4U0X7</accession>
<sequence length="350" mass="38866">MAHFPGFGQSLLYGYPVYVFGDCVQADWCPISGGLCSARLHRHALLATCPEHQITWDPIDGRVVSSALQYLIPRLPSFPTQRTTRTLKVLTPPTTATTPKVPPSFFHAVKKHTPFRNNCLELTLGEQLPAMSFPDPGLRPQNVYTIWGCSVVCLYLYQLSPPMTWPLIPHVIFCHPEQLGAFLTRVPTKRLEELLYKIFLSTGAIIILPENCFPTTLFQPTRAPAIQAPWHTGLLPCQKEIVTPGLIWTFTDGSPMISGPCPKEGQPSLVVQSSTFIFQQFQTKASHPAFLLSHKLIQYSSFHSLHLLFEEYSTVPFSLLFNEKGANVSDDEPRGGPQPPTGGQIAESSV</sequence>
<organismHost>
    <name type="scientific">Homo sapiens</name>
    <name type="common">Human</name>
    <dbReference type="NCBI Taxonomy" id="9606"/>
</organismHost>
<protein>
    <recommendedName>
        <fullName>Protein Tax-3</fullName>
    </recommendedName>
    <alternativeName>
        <fullName>Trans-activating transcriptional regulatory protein of HTLV-3</fullName>
    </alternativeName>
</protein>
<dbReference type="EMBL" id="DQ462191">
    <property type="protein sequence ID" value="AAY34568.2"/>
    <property type="molecule type" value="Genomic_DNA"/>
</dbReference>
<dbReference type="Proteomes" id="UP000007684">
    <property type="component" value="Genome"/>
</dbReference>
<dbReference type="GO" id="GO:0030430">
    <property type="term" value="C:host cell cytoplasm"/>
    <property type="evidence" value="ECO:0007669"/>
    <property type="project" value="UniProtKB-SubCell"/>
</dbReference>
<dbReference type="GO" id="GO:0042025">
    <property type="term" value="C:host cell nucleus"/>
    <property type="evidence" value="ECO:0007669"/>
    <property type="project" value="UniProtKB-SubCell"/>
</dbReference>
<dbReference type="GO" id="GO:0003677">
    <property type="term" value="F:DNA binding"/>
    <property type="evidence" value="ECO:0007669"/>
    <property type="project" value="UniProtKB-KW"/>
</dbReference>
<dbReference type="GO" id="GO:0017124">
    <property type="term" value="F:SH3 domain binding"/>
    <property type="evidence" value="ECO:0007669"/>
    <property type="project" value="UniProtKB-KW"/>
</dbReference>
<dbReference type="GO" id="GO:0008270">
    <property type="term" value="F:zinc ion binding"/>
    <property type="evidence" value="ECO:0007669"/>
    <property type="project" value="UniProtKB-KW"/>
</dbReference>
<dbReference type="GO" id="GO:0045893">
    <property type="term" value="P:positive regulation of DNA-templated transcription"/>
    <property type="evidence" value="ECO:0007669"/>
    <property type="project" value="InterPro"/>
</dbReference>
<dbReference type="GO" id="GO:0039646">
    <property type="term" value="P:symbiont-mediated perturbation of host cell cycle G0/G1 transition checkpoint"/>
    <property type="evidence" value="ECO:0007669"/>
    <property type="project" value="UniProtKB-KW"/>
</dbReference>
<dbReference type="GO" id="GO:0044071">
    <property type="term" value="P:symbiont-mediated perturbation of host cell cycle progression"/>
    <property type="evidence" value="ECO:0007669"/>
    <property type="project" value="UniProtKB-KW"/>
</dbReference>
<dbReference type="InterPro" id="IPR004120">
    <property type="entry name" value="Tax"/>
</dbReference>
<dbReference type="Pfam" id="PF02959">
    <property type="entry name" value="Tax"/>
    <property type="match status" value="1"/>
</dbReference>
<evidence type="ECO:0000250" key="1"/>
<evidence type="ECO:0000255" key="2"/>
<evidence type="ECO:0000256" key="3">
    <source>
        <dbReference type="SAM" id="MobiDB-lite"/>
    </source>
</evidence>
<evidence type="ECO:0000269" key="4">
    <source>
    </source>
</evidence>
<evidence type="ECO:0000305" key="5"/>
<organism>
    <name type="scientific">Human T-cell leukemia virus 3 (strain Pyl43)</name>
    <name type="common">HTLV-3</name>
    <dbReference type="NCBI Taxonomy" id="406769"/>
    <lineage>
        <taxon>Viruses</taxon>
        <taxon>Riboviria</taxon>
        <taxon>Pararnavirae</taxon>
        <taxon>Artverviricota</taxon>
        <taxon>Revtraviricetes</taxon>
        <taxon>Ortervirales</taxon>
        <taxon>Retroviridae</taxon>
        <taxon>Orthoretrovirinae</taxon>
        <taxon>Deltaretrovirus</taxon>
        <taxon>Primate T-lymphotropic virus 3</taxon>
    </lineage>
</organism>
<reference key="1">
    <citation type="journal article" date="2006" name="J. Virol.">
        <title>Human T-cell lymphotropic virus type 3: complete nucleotide sequence and characterization of the human tax3 protein.</title>
        <authorList>
            <person name="Calattini S."/>
            <person name="Chevalier S.A."/>
            <person name="Duprez R."/>
            <person name="Afonso P."/>
            <person name="Froment A."/>
            <person name="Gessain A."/>
            <person name="Mahieux R."/>
        </authorList>
    </citation>
    <scope>NUCLEOTIDE SEQUENCE [GENOMIC DNA]</scope>
    <scope>CHARACTERIZATION</scope>
    <scope>SUBCELLULAR LOCATION</scope>
    <scope>PDZ-BINDING MOTIF</scope>
    <scope>MUTAGENESIS OF MET-131 AND 319-LEU-LEU-320</scope>
</reference>